<accession>Q0I243</accession>
<reference key="1">
    <citation type="journal article" date="2007" name="J. Bacteriol.">
        <title>Complete genome sequence of Haemophilus somnus (Histophilus somni) strain 129Pt and comparison to Haemophilus ducreyi 35000HP and Haemophilus influenzae Rd.</title>
        <authorList>
            <person name="Challacombe J.F."/>
            <person name="Duncan A.J."/>
            <person name="Brettin T.S."/>
            <person name="Bruce D."/>
            <person name="Chertkov O."/>
            <person name="Detter J.C."/>
            <person name="Han C.S."/>
            <person name="Misra M."/>
            <person name="Richardson P."/>
            <person name="Tapia R."/>
            <person name="Thayer N."/>
            <person name="Xie G."/>
            <person name="Inzana T.J."/>
        </authorList>
    </citation>
    <scope>NUCLEOTIDE SEQUENCE [LARGE SCALE GENOMIC DNA]</scope>
    <source>
        <strain>129Pt</strain>
    </source>
</reference>
<proteinExistence type="inferred from homology"/>
<dbReference type="EC" id="3.1.21.10" evidence="1"/>
<dbReference type="EMBL" id="CP000436">
    <property type="protein sequence ID" value="ABI24786.1"/>
    <property type="molecule type" value="Genomic_DNA"/>
</dbReference>
<dbReference type="SMR" id="Q0I243"/>
<dbReference type="KEGG" id="hso:HS_0509"/>
<dbReference type="eggNOG" id="COG0817">
    <property type="taxonomic scope" value="Bacteria"/>
</dbReference>
<dbReference type="HOGENOM" id="CLU_091257_2_1_6"/>
<dbReference type="GO" id="GO:0005737">
    <property type="term" value="C:cytoplasm"/>
    <property type="evidence" value="ECO:0007669"/>
    <property type="project" value="UniProtKB-SubCell"/>
</dbReference>
<dbReference type="GO" id="GO:0048476">
    <property type="term" value="C:Holliday junction resolvase complex"/>
    <property type="evidence" value="ECO:0007669"/>
    <property type="project" value="UniProtKB-UniRule"/>
</dbReference>
<dbReference type="GO" id="GO:0008821">
    <property type="term" value="F:crossover junction DNA endonuclease activity"/>
    <property type="evidence" value="ECO:0007669"/>
    <property type="project" value="UniProtKB-UniRule"/>
</dbReference>
<dbReference type="GO" id="GO:0003677">
    <property type="term" value="F:DNA binding"/>
    <property type="evidence" value="ECO:0007669"/>
    <property type="project" value="UniProtKB-KW"/>
</dbReference>
<dbReference type="GO" id="GO:0000287">
    <property type="term" value="F:magnesium ion binding"/>
    <property type="evidence" value="ECO:0007669"/>
    <property type="project" value="UniProtKB-UniRule"/>
</dbReference>
<dbReference type="GO" id="GO:0006310">
    <property type="term" value="P:DNA recombination"/>
    <property type="evidence" value="ECO:0007669"/>
    <property type="project" value="UniProtKB-UniRule"/>
</dbReference>
<dbReference type="GO" id="GO:0006281">
    <property type="term" value="P:DNA repair"/>
    <property type="evidence" value="ECO:0007669"/>
    <property type="project" value="UniProtKB-UniRule"/>
</dbReference>
<dbReference type="CDD" id="cd16962">
    <property type="entry name" value="RuvC"/>
    <property type="match status" value="1"/>
</dbReference>
<dbReference type="FunFam" id="3.30.420.10:FF:000002">
    <property type="entry name" value="Crossover junction endodeoxyribonuclease RuvC"/>
    <property type="match status" value="1"/>
</dbReference>
<dbReference type="Gene3D" id="3.30.420.10">
    <property type="entry name" value="Ribonuclease H-like superfamily/Ribonuclease H"/>
    <property type="match status" value="1"/>
</dbReference>
<dbReference type="HAMAP" id="MF_00034">
    <property type="entry name" value="RuvC"/>
    <property type="match status" value="1"/>
</dbReference>
<dbReference type="InterPro" id="IPR012337">
    <property type="entry name" value="RNaseH-like_sf"/>
</dbReference>
<dbReference type="InterPro" id="IPR036397">
    <property type="entry name" value="RNaseH_sf"/>
</dbReference>
<dbReference type="InterPro" id="IPR020563">
    <property type="entry name" value="X-over_junc_endoDNase_Mg_BS"/>
</dbReference>
<dbReference type="InterPro" id="IPR002176">
    <property type="entry name" value="X-over_junc_endoDNase_RuvC"/>
</dbReference>
<dbReference type="NCBIfam" id="TIGR00228">
    <property type="entry name" value="ruvC"/>
    <property type="match status" value="1"/>
</dbReference>
<dbReference type="PANTHER" id="PTHR30194">
    <property type="entry name" value="CROSSOVER JUNCTION ENDODEOXYRIBONUCLEASE RUVC"/>
    <property type="match status" value="1"/>
</dbReference>
<dbReference type="PANTHER" id="PTHR30194:SF3">
    <property type="entry name" value="CROSSOVER JUNCTION ENDODEOXYRIBONUCLEASE RUVC"/>
    <property type="match status" value="1"/>
</dbReference>
<dbReference type="Pfam" id="PF02075">
    <property type="entry name" value="RuvC"/>
    <property type="match status" value="1"/>
</dbReference>
<dbReference type="PRINTS" id="PR00696">
    <property type="entry name" value="RSOLVASERUVC"/>
</dbReference>
<dbReference type="SUPFAM" id="SSF53098">
    <property type="entry name" value="Ribonuclease H-like"/>
    <property type="match status" value="1"/>
</dbReference>
<dbReference type="PROSITE" id="PS01321">
    <property type="entry name" value="RUVC"/>
    <property type="match status" value="1"/>
</dbReference>
<feature type="chain" id="PRO_1000002763" description="Crossover junction endodeoxyribonuclease RuvC">
    <location>
        <begin position="1"/>
        <end position="189"/>
    </location>
</feature>
<feature type="active site" evidence="1">
    <location>
        <position position="8"/>
    </location>
</feature>
<feature type="active site" evidence="1">
    <location>
        <position position="67"/>
    </location>
</feature>
<feature type="active site" evidence="1">
    <location>
        <position position="139"/>
    </location>
</feature>
<feature type="binding site" evidence="1">
    <location>
        <position position="8"/>
    </location>
    <ligand>
        <name>Mg(2+)</name>
        <dbReference type="ChEBI" id="CHEBI:18420"/>
        <label>1</label>
    </ligand>
</feature>
<feature type="binding site" evidence="1">
    <location>
        <position position="67"/>
    </location>
    <ligand>
        <name>Mg(2+)</name>
        <dbReference type="ChEBI" id="CHEBI:18420"/>
        <label>2</label>
    </ligand>
</feature>
<feature type="binding site" evidence="1">
    <location>
        <position position="139"/>
    </location>
    <ligand>
        <name>Mg(2+)</name>
        <dbReference type="ChEBI" id="CHEBI:18420"/>
        <label>1</label>
    </ligand>
</feature>
<sequence length="189" mass="20574">MSIILGIDPGSRVTGYGVVRQVGHKLEYLGSGVIRTSIDDLPTRLKRIYAGITEIITQFNPNEFAIEQVFMAKNPDSALKLGQARGTAIVAAVNQNLPVFEYSPRTIKQTVVGTGAAEKSQVQEMVVRLLQLSDKPQVDAADALAIAITHANSIHNSLQIANSIAIKTPDKITALLRTKYRRGRLRLKG</sequence>
<name>RUVC_HISS1</name>
<gene>
    <name evidence="1" type="primary">ruvC</name>
    <name type="ordered locus">HS_0509</name>
</gene>
<protein>
    <recommendedName>
        <fullName evidence="1">Crossover junction endodeoxyribonuclease RuvC</fullName>
        <ecNumber evidence="1">3.1.21.10</ecNumber>
    </recommendedName>
    <alternativeName>
        <fullName evidence="1">Holliday junction nuclease RuvC</fullName>
    </alternativeName>
    <alternativeName>
        <fullName evidence="1">Holliday junction resolvase RuvC</fullName>
    </alternativeName>
</protein>
<organism>
    <name type="scientific">Histophilus somni (strain 129Pt)</name>
    <name type="common">Haemophilus somnus</name>
    <dbReference type="NCBI Taxonomy" id="205914"/>
    <lineage>
        <taxon>Bacteria</taxon>
        <taxon>Pseudomonadati</taxon>
        <taxon>Pseudomonadota</taxon>
        <taxon>Gammaproteobacteria</taxon>
        <taxon>Pasteurellales</taxon>
        <taxon>Pasteurellaceae</taxon>
        <taxon>Histophilus</taxon>
    </lineage>
</organism>
<keyword id="KW-0963">Cytoplasm</keyword>
<keyword id="KW-0227">DNA damage</keyword>
<keyword id="KW-0233">DNA recombination</keyword>
<keyword id="KW-0234">DNA repair</keyword>
<keyword id="KW-0238">DNA-binding</keyword>
<keyword id="KW-0255">Endonuclease</keyword>
<keyword id="KW-0378">Hydrolase</keyword>
<keyword id="KW-0460">Magnesium</keyword>
<keyword id="KW-0479">Metal-binding</keyword>
<keyword id="KW-0540">Nuclease</keyword>
<comment type="function">
    <text evidence="1">The RuvA-RuvB-RuvC complex processes Holliday junction (HJ) DNA during genetic recombination and DNA repair. Endonuclease that resolves HJ intermediates. Cleaves cruciform DNA by making single-stranded nicks across the HJ at symmetrical positions within the homologous arms, yielding a 5'-phosphate and a 3'-hydroxyl group; requires a central core of homology in the junction. The consensus cleavage sequence is 5'-(A/T)TT(C/G)-3'. Cleavage occurs on the 3'-side of the TT dinucleotide at the point of strand exchange. HJ branch migration catalyzed by RuvA-RuvB allows RuvC to scan DNA until it finds its consensus sequence, where it cleaves and resolves the cruciform DNA.</text>
</comment>
<comment type="catalytic activity">
    <reaction evidence="1">
        <text>Endonucleolytic cleavage at a junction such as a reciprocal single-stranded crossover between two homologous DNA duplexes (Holliday junction).</text>
        <dbReference type="EC" id="3.1.21.10"/>
    </reaction>
</comment>
<comment type="cofactor">
    <cofactor evidence="1">
        <name>Mg(2+)</name>
        <dbReference type="ChEBI" id="CHEBI:18420"/>
    </cofactor>
    <text evidence="1">Binds 2 Mg(2+) ion per subunit.</text>
</comment>
<comment type="subunit">
    <text evidence="1">Homodimer which binds Holliday junction (HJ) DNA. The HJ becomes 2-fold symmetrical on binding to RuvC with unstacked arms; it has a different conformation from HJ DNA in complex with RuvA. In the full resolvosome a probable DNA-RuvA(4)-RuvB(12)-RuvC(2) complex forms which resolves the HJ.</text>
</comment>
<comment type="subcellular location">
    <subcellularLocation>
        <location evidence="1">Cytoplasm</location>
    </subcellularLocation>
</comment>
<comment type="similarity">
    <text evidence="1">Belongs to the RuvC family.</text>
</comment>
<evidence type="ECO:0000255" key="1">
    <source>
        <dbReference type="HAMAP-Rule" id="MF_00034"/>
    </source>
</evidence>